<name>BOA3_BOTFB</name>
<protein>
    <recommendedName>
        <fullName evidence="7">Cytochrome P450 monooxygenase BOA3</fullName>
        <ecNumber evidence="9">1.-.-.-</ecNumber>
    </recommendedName>
    <alternativeName>
        <fullName evidence="7">Botcinic acid biosynthesis cluster A protein 3</fullName>
    </alternativeName>
</protein>
<dbReference type="EC" id="1.-.-.-" evidence="9"/>
<dbReference type="EMBL" id="AM930228">
    <property type="protein sequence ID" value="CAP58782.1"/>
    <property type="molecule type" value="Genomic_DNA"/>
</dbReference>
<dbReference type="SMR" id="B1GVX3"/>
<dbReference type="EnsemblFungi" id="Bcin01g00030.1">
    <property type="protein sequence ID" value="Bcin01p00030.1"/>
    <property type="gene ID" value="Bcin01g00030"/>
</dbReference>
<dbReference type="KEGG" id="bfu:BCIN_01g00030"/>
<dbReference type="VEuPathDB" id="FungiDB:Bcin01g00030"/>
<dbReference type="OMA" id="ARTHFWI"/>
<dbReference type="OrthoDB" id="1470350at2759"/>
<dbReference type="GO" id="GO:0016020">
    <property type="term" value="C:membrane"/>
    <property type="evidence" value="ECO:0007669"/>
    <property type="project" value="UniProtKB-SubCell"/>
</dbReference>
<dbReference type="GO" id="GO:0020037">
    <property type="term" value="F:heme binding"/>
    <property type="evidence" value="ECO:0007669"/>
    <property type="project" value="InterPro"/>
</dbReference>
<dbReference type="GO" id="GO:0005506">
    <property type="term" value="F:iron ion binding"/>
    <property type="evidence" value="ECO:0007669"/>
    <property type="project" value="InterPro"/>
</dbReference>
<dbReference type="GO" id="GO:0004497">
    <property type="term" value="F:monooxygenase activity"/>
    <property type="evidence" value="ECO:0007669"/>
    <property type="project" value="UniProtKB-KW"/>
</dbReference>
<dbReference type="GO" id="GO:0016705">
    <property type="term" value="F:oxidoreductase activity, acting on paired donors, with incorporation or reduction of molecular oxygen"/>
    <property type="evidence" value="ECO:0007669"/>
    <property type="project" value="InterPro"/>
</dbReference>
<dbReference type="GO" id="GO:0009058">
    <property type="term" value="P:biosynthetic process"/>
    <property type="evidence" value="ECO:0007669"/>
    <property type="project" value="UniProtKB-ARBA"/>
</dbReference>
<dbReference type="CDD" id="cd11058">
    <property type="entry name" value="CYP60B-like"/>
    <property type="match status" value="1"/>
</dbReference>
<dbReference type="FunFam" id="1.10.630.10:FF:000158">
    <property type="entry name" value="Cytochrome P450, putative (Eurofung)"/>
    <property type="match status" value="1"/>
</dbReference>
<dbReference type="Gene3D" id="1.10.630.10">
    <property type="entry name" value="Cytochrome P450"/>
    <property type="match status" value="1"/>
</dbReference>
<dbReference type="InterPro" id="IPR001128">
    <property type="entry name" value="Cyt_P450"/>
</dbReference>
<dbReference type="InterPro" id="IPR017972">
    <property type="entry name" value="Cyt_P450_CS"/>
</dbReference>
<dbReference type="InterPro" id="IPR002401">
    <property type="entry name" value="Cyt_P450_E_grp-I"/>
</dbReference>
<dbReference type="InterPro" id="IPR036396">
    <property type="entry name" value="Cyt_P450_sf"/>
</dbReference>
<dbReference type="InterPro" id="IPR050121">
    <property type="entry name" value="Cytochrome_P450_monoxygenase"/>
</dbReference>
<dbReference type="PANTHER" id="PTHR24305">
    <property type="entry name" value="CYTOCHROME P450"/>
    <property type="match status" value="1"/>
</dbReference>
<dbReference type="PANTHER" id="PTHR24305:SF210">
    <property type="entry name" value="CYTOCHROME P450 MONOOXYGENASE ASQL-RELATED"/>
    <property type="match status" value="1"/>
</dbReference>
<dbReference type="Pfam" id="PF00067">
    <property type="entry name" value="p450"/>
    <property type="match status" value="1"/>
</dbReference>
<dbReference type="PRINTS" id="PR00463">
    <property type="entry name" value="EP450I"/>
</dbReference>
<dbReference type="PRINTS" id="PR00385">
    <property type="entry name" value="P450"/>
</dbReference>
<dbReference type="SUPFAM" id="SSF48264">
    <property type="entry name" value="Cytochrome P450"/>
    <property type="match status" value="1"/>
</dbReference>
<dbReference type="PROSITE" id="PS00086">
    <property type="entry name" value="CYTOCHROME_P450"/>
    <property type="match status" value="1"/>
</dbReference>
<comment type="function">
    <text evidence="3 4 5 10">Cytochrome P450 monooxygenase; part of the gene cluster A that mediates the biosynthesis of botcinic acid and its botcinin derivatives, acetate-derived polyketides that contribute to virulence when combined with the sesquiterpene botrydial (PubMed:18208491, PubMed:21722295). Botcinic acid and its derivatives have been shown to induce chlorosis and necrosis during host plant infection, but also have antifungal activities (PubMed:18208491, PubMed:21722295). Two polyketide synthases, BOA6 and BOA9, are involved in the biosynthesis of botcinins. BOA6 mediates the formation of the per-methylated tetraketide core by condensation of four units of malonyl-CoA with one unit of acetyl-CoA, which would be methylated in activated methylene groups to yield a bicyclic acid intermediate that could then either be converted to botrylactone derivatives or lose the starter acetate unit through a retro-Claisen type C-C bond cleavage to yield botcinin derivatives (PubMed:23203902). The second polyketide synthase, BOA9, is probably required for the biosynthesis of the tetraketide side chain of botcinins (Probable). The methyltransferase (MT) domain within BOA6 is probably responsible for the incorporation of four methyl groups (Probable). The trans-enoyl reductase BOA5 might take over the enoyl reductase function of BOA6 that misses an ER domain (Probable). The monooxygenases BOA2, BOA3 and BOA4 might be involved in further hydroxylations at C4, C5 and C8, whereas BOA7, close to BOA9, could potentially be involved in the hydroxylation at C4 in the side chain of botcinins (Probable).</text>
</comment>
<comment type="cofactor">
    <cofactor evidence="1">
        <name>heme</name>
        <dbReference type="ChEBI" id="CHEBI:30413"/>
    </cofactor>
</comment>
<comment type="pathway">
    <text evidence="9 10">Polyketide biosynthesis.</text>
</comment>
<comment type="subcellular location">
    <subcellularLocation>
        <location evidence="2">Membrane</location>
        <topology evidence="2">Single-pass membrane protein</topology>
    </subcellularLocation>
</comment>
<comment type="induction">
    <text evidence="3 4">Expression of the botcinic acid clusters genes BOA1-13 and BOA17 is coregulated by BCG1 during both in vitro and in planta growth.</text>
</comment>
<comment type="similarity">
    <text evidence="8">Belongs to the cytochrome P450 family.</text>
</comment>
<proteinExistence type="evidence at transcript level"/>
<gene>
    <name evidence="7" type="primary">BOA3</name>
    <name evidence="6" type="synonym">P450-2</name>
</gene>
<evidence type="ECO:0000250" key="1">
    <source>
        <dbReference type="UniProtKB" id="P04798"/>
    </source>
</evidence>
<evidence type="ECO:0000255" key="2"/>
<evidence type="ECO:0000269" key="3">
    <source>
    </source>
</evidence>
<evidence type="ECO:0000269" key="4">
    <source>
    </source>
</evidence>
<evidence type="ECO:0000269" key="5">
    <source>
    </source>
</evidence>
<evidence type="ECO:0000303" key="6">
    <source>
    </source>
</evidence>
<evidence type="ECO:0000303" key="7">
    <source>
    </source>
</evidence>
<evidence type="ECO:0000305" key="8"/>
<evidence type="ECO:0000305" key="9">
    <source>
    </source>
</evidence>
<evidence type="ECO:0000305" key="10">
    <source>
    </source>
</evidence>
<reference key="1">
    <citation type="journal article" date="2008" name="Mol. Microbiol.">
        <title>The Galpha subunit BCG1, the phospholipase C (BcPLC1) and the calcineurin phosphatase co-ordinately regulate gene expression in the grey mould fungus Botrytis cinerea.</title>
        <authorList>
            <person name="Schumacher J."/>
            <person name="Viaud M."/>
            <person name="Simon A."/>
            <person name="Tudzynski B."/>
        </authorList>
    </citation>
    <scope>NUCLEOTIDE SEQUENCE [GENOMIC DNA]</scope>
    <scope>INDUCTION</scope>
    <source>
        <strain>B05.10</strain>
    </source>
</reference>
<reference key="2">
    <citation type="journal article" date="2011" name="Mol. Plant Pathol.">
        <title>The Botrytis cinerea phytotoxin botcinic acid requires two polyketide synthases for production and has a redundant role in virulence with botrydial.</title>
        <authorList>
            <person name="Dalmais B."/>
            <person name="Schumacher J."/>
            <person name="Moraga J."/>
            <person name="Le Pecheur P."/>
            <person name="Tudzynski B."/>
            <person name="Collado I.G."/>
            <person name="Viaud M."/>
        </authorList>
    </citation>
    <scope>FUNCTION</scope>
    <scope>INDUCTION</scope>
    <scope>PATHWAY</scope>
</reference>
<reference key="3">
    <citation type="journal article" date="2013" name="ChemBioChem">
        <title>A shared biosynthetic pathway for botcinins and botrylactones revealed through gene deletions.</title>
        <authorList>
            <person name="Massaroli M."/>
            <person name="Moraga J."/>
            <person name="Bastos Borges K."/>
            <person name="Ramirez-Fernandez J."/>
            <person name="Viaud M."/>
            <person name="Gonzalez Collado I."/>
            <person name="Duran-Patron R."/>
            <person name="Hernandez-Galan R."/>
        </authorList>
    </citation>
    <scope>FUNCTION</scope>
    <scope>PATHWAY</scope>
</reference>
<organism>
    <name type="scientific">Botryotinia fuckeliana (strain B05.10)</name>
    <name type="common">Noble rot fungus</name>
    <name type="synonym">Botrytis cinerea</name>
    <dbReference type="NCBI Taxonomy" id="332648"/>
    <lineage>
        <taxon>Eukaryota</taxon>
        <taxon>Fungi</taxon>
        <taxon>Dikarya</taxon>
        <taxon>Ascomycota</taxon>
        <taxon>Pezizomycotina</taxon>
        <taxon>Leotiomycetes</taxon>
        <taxon>Helotiales</taxon>
        <taxon>Sclerotiniaceae</taxon>
        <taxon>Botrytis</taxon>
    </lineage>
</organism>
<accession>B1GVX3</accession>
<sequence>MFAVELLERLGLPTIYLWIGFVLVVLLAYPTYFAIYNLYFHPLRKFPGPLIARSSYIWYAKNWIGGRWPHALSDLHEKYGQVVRIAPDELAFSSAQSWRDIYGHSVKGKKYFRKTDWYAGVGDLPNSISTEPDPQKHSAMRRVLANAFSNSVLKGQADVINKYLDMFVSQIKKHDNPNGIPVEEWFNWLTFDIIGDLTFHESFGAVENARTHFWIHLIINGNFIRSLYPIFQKIPISRLFMKWIIPNMDEIRQQRREHIAHTNSKAMKRANRDDIVQKDFFSFLLGKEGADTSEMFLTAQAHTLIIAGSETTAVTLTAMVSFLLRYPDKMKILIDEVRGAFTDKSQINVEGTLPLEYLFAVIEETLRILPPVPFGLPRTCPGAVIDGHVVPEGTIVSVSPYTASHDVRYWHDPEGWHPERWLPSDHPLHNPVFDQDNKEASKPFSTGPRVCLGVNLAYIELRMTLARLLFEFDMELLSKPVDWNTELDFFQFWKKVETRVKFTSLH</sequence>
<feature type="chain" id="PRO_0000444639" description="Cytochrome P450 monooxygenase BOA3">
    <location>
        <begin position="1"/>
        <end position="506"/>
    </location>
</feature>
<feature type="transmembrane region" description="Helical" evidence="2">
    <location>
        <begin position="15"/>
        <end position="35"/>
    </location>
</feature>
<feature type="binding site" description="axial binding residue" evidence="1">
    <location>
        <position position="451"/>
    </location>
    <ligand>
        <name>heme</name>
        <dbReference type="ChEBI" id="CHEBI:30413"/>
    </ligand>
    <ligandPart>
        <name>Fe</name>
        <dbReference type="ChEBI" id="CHEBI:18248"/>
    </ligandPart>
</feature>
<keyword id="KW-0349">Heme</keyword>
<keyword id="KW-0408">Iron</keyword>
<keyword id="KW-0472">Membrane</keyword>
<keyword id="KW-0479">Metal-binding</keyword>
<keyword id="KW-0503">Monooxygenase</keyword>
<keyword id="KW-0560">Oxidoreductase</keyword>
<keyword id="KW-0812">Transmembrane</keyword>
<keyword id="KW-1133">Transmembrane helix</keyword>
<keyword id="KW-0843">Virulence</keyword>